<comment type="function">
    <text evidence="1">Catalyzes the anti-1,4-elimination of the C-3 phosphate and the C-6 proR hydrogen from 5-enolpyruvylshikimate-3-phosphate (EPSP) to yield chorismate, which is the branch point compound that serves as the starting substrate for the three terminal pathways of aromatic amino acid biosynthesis. This reaction introduces a second double bond into the aromatic ring system.</text>
</comment>
<comment type="catalytic activity">
    <reaction evidence="1">
        <text>5-O-(1-carboxyvinyl)-3-phosphoshikimate = chorismate + phosphate</text>
        <dbReference type="Rhea" id="RHEA:21020"/>
        <dbReference type="ChEBI" id="CHEBI:29748"/>
        <dbReference type="ChEBI" id="CHEBI:43474"/>
        <dbReference type="ChEBI" id="CHEBI:57701"/>
        <dbReference type="EC" id="4.2.3.5"/>
    </reaction>
</comment>
<comment type="cofactor">
    <cofactor evidence="1">
        <name>FMNH2</name>
        <dbReference type="ChEBI" id="CHEBI:57618"/>
    </cofactor>
    <text evidence="1">Reduced FMN (FMNH(2)).</text>
</comment>
<comment type="pathway">
    <text evidence="1">Metabolic intermediate biosynthesis; chorismate biosynthesis; chorismate from D-erythrose 4-phosphate and phosphoenolpyruvate: step 7/7.</text>
</comment>
<comment type="subunit">
    <text evidence="1">Homotetramer.</text>
</comment>
<comment type="similarity">
    <text evidence="1">Belongs to the chorismate synthase family.</text>
</comment>
<evidence type="ECO:0000255" key="1">
    <source>
        <dbReference type="HAMAP-Rule" id="MF_00300"/>
    </source>
</evidence>
<gene>
    <name evidence="1" type="primary">aroC</name>
    <name type="ordered locus">glr3393</name>
</gene>
<name>AROC_GLOVI</name>
<reference key="1">
    <citation type="journal article" date="2003" name="DNA Res.">
        <title>Complete genome structure of Gloeobacter violaceus PCC 7421, a cyanobacterium that lacks thylakoids.</title>
        <authorList>
            <person name="Nakamura Y."/>
            <person name="Kaneko T."/>
            <person name="Sato S."/>
            <person name="Mimuro M."/>
            <person name="Miyashita H."/>
            <person name="Tsuchiya T."/>
            <person name="Sasamoto S."/>
            <person name="Watanabe A."/>
            <person name="Kawashima K."/>
            <person name="Kishida Y."/>
            <person name="Kiyokawa C."/>
            <person name="Kohara M."/>
            <person name="Matsumoto M."/>
            <person name="Matsuno A."/>
            <person name="Nakazaki N."/>
            <person name="Shimpo S."/>
            <person name="Takeuchi C."/>
            <person name="Yamada M."/>
            <person name="Tabata S."/>
        </authorList>
    </citation>
    <scope>NUCLEOTIDE SEQUENCE [LARGE SCALE GENOMIC DNA]</scope>
    <source>
        <strain>ATCC 29082 / PCC 7421</strain>
    </source>
</reference>
<keyword id="KW-0028">Amino-acid biosynthesis</keyword>
<keyword id="KW-0057">Aromatic amino acid biosynthesis</keyword>
<keyword id="KW-0274">FAD</keyword>
<keyword id="KW-0285">Flavoprotein</keyword>
<keyword id="KW-0288">FMN</keyword>
<keyword id="KW-0456">Lyase</keyword>
<keyword id="KW-0521">NADP</keyword>
<keyword id="KW-1185">Reference proteome</keyword>
<proteinExistence type="inferred from homology"/>
<organism>
    <name type="scientific">Gloeobacter violaceus (strain ATCC 29082 / PCC 7421)</name>
    <dbReference type="NCBI Taxonomy" id="251221"/>
    <lineage>
        <taxon>Bacteria</taxon>
        <taxon>Bacillati</taxon>
        <taxon>Cyanobacteriota</taxon>
        <taxon>Cyanophyceae</taxon>
        <taxon>Gloeobacterales</taxon>
        <taxon>Gloeobacteraceae</taxon>
        <taxon>Gloeobacter</taxon>
    </lineage>
</organism>
<accession>Q7NFY1</accession>
<sequence>MLRFLTAGESHGPGLTIIVEGIPADLPLLAEDIDRDLARRQVGFGRGGRMSIETDRVTFRGGVRLGRTIGSPIAMTLENRDFKNWEVPMSVSPVDLDDEAVRAQLEAKRITRLRPGHADYPGAVKYGLADVRNILERSSARETASRVAAGAIAKQLLRQFNVHVHSHVVEIGGVGAGESVRPALPTFEEWKDLFERVDQNDLRCHPDLYERLRSRVVEAAKGGYTLGGAVELAAYGEIPVGLGSHVHYDRRIDGLLAGAAMSVHTVKAVEVGIGTAAARETGADVQDEFINAAGEIARTSNHAGGIEGGMTNGQPVLLRAYLKPLPTMRKALRSIDLVSREPFEAHYERSDTCAVPAGGVVCEAMMAIVLAQELQRKLGGDSLGEMLRHAGRTHA</sequence>
<protein>
    <recommendedName>
        <fullName evidence="1">Chorismate synthase</fullName>
        <shortName evidence="1">CS</shortName>
        <ecNumber evidence="1">4.2.3.5</ecNumber>
    </recommendedName>
    <alternativeName>
        <fullName evidence="1">5-enolpyruvylshikimate-3-phosphate phospholyase</fullName>
    </alternativeName>
</protein>
<feature type="chain" id="PRO_0000322402" description="Chorismate synthase">
    <location>
        <begin position="1"/>
        <end position="395"/>
    </location>
</feature>
<feature type="binding site" evidence="1">
    <location>
        <position position="40"/>
    </location>
    <ligand>
        <name>NADP(+)</name>
        <dbReference type="ChEBI" id="CHEBI:58349"/>
    </ligand>
</feature>
<feature type="binding site" evidence="1">
    <location>
        <position position="46"/>
    </location>
    <ligand>
        <name>NADP(+)</name>
        <dbReference type="ChEBI" id="CHEBI:58349"/>
    </ligand>
</feature>
<feature type="binding site" evidence="1">
    <location>
        <begin position="137"/>
        <end position="139"/>
    </location>
    <ligand>
        <name>FMN</name>
        <dbReference type="ChEBI" id="CHEBI:58210"/>
    </ligand>
</feature>
<feature type="binding site" evidence="1">
    <location>
        <position position="308"/>
    </location>
    <ligand>
        <name>FMN</name>
        <dbReference type="ChEBI" id="CHEBI:58210"/>
    </ligand>
</feature>
<feature type="binding site" evidence="1">
    <location>
        <begin position="323"/>
        <end position="327"/>
    </location>
    <ligand>
        <name>FMN</name>
        <dbReference type="ChEBI" id="CHEBI:58210"/>
    </ligand>
</feature>
<feature type="binding site" evidence="1">
    <location>
        <position position="349"/>
    </location>
    <ligand>
        <name>FMN</name>
        <dbReference type="ChEBI" id="CHEBI:58210"/>
    </ligand>
</feature>
<dbReference type="EC" id="4.2.3.5" evidence="1"/>
<dbReference type="EMBL" id="BA000045">
    <property type="protein sequence ID" value="BAC91334.1"/>
    <property type="molecule type" value="Genomic_DNA"/>
</dbReference>
<dbReference type="RefSeq" id="NP_926339.1">
    <property type="nucleotide sequence ID" value="NC_005125.1"/>
</dbReference>
<dbReference type="RefSeq" id="WP_011143382.1">
    <property type="nucleotide sequence ID" value="NC_005125.1"/>
</dbReference>
<dbReference type="SMR" id="Q7NFY1"/>
<dbReference type="FunCoup" id="Q7NFY1">
    <property type="interactions" value="277"/>
</dbReference>
<dbReference type="STRING" id="251221.gene:10760905"/>
<dbReference type="EnsemblBacteria" id="BAC91334">
    <property type="protein sequence ID" value="BAC91334"/>
    <property type="gene ID" value="BAC91334"/>
</dbReference>
<dbReference type="KEGG" id="gvi:glr3393"/>
<dbReference type="PATRIC" id="fig|251221.4.peg.3429"/>
<dbReference type="eggNOG" id="COG0082">
    <property type="taxonomic scope" value="Bacteria"/>
</dbReference>
<dbReference type="HOGENOM" id="CLU_034547_2_0_3"/>
<dbReference type="InParanoid" id="Q7NFY1"/>
<dbReference type="OrthoDB" id="9771806at2"/>
<dbReference type="PhylomeDB" id="Q7NFY1"/>
<dbReference type="UniPathway" id="UPA00053">
    <property type="reaction ID" value="UER00090"/>
</dbReference>
<dbReference type="Proteomes" id="UP000000557">
    <property type="component" value="Chromosome"/>
</dbReference>
<dbReference type="GO" id="GO:0005829">
    <property type="term" value="C:cytosol"/>
    <property type="evidence" value="ECO:0000318"/>
    <property type="project" value="GO_Central"/>
</dbReference>
<dbReference type="GO" id="GO:0004107">
    <property type="term" value="F:chorismate synthase activity"/>
    <property type="evidence" value="ECO:0000318"/>
    <property type="project" value="GO_Central"/>
</dbReference>
<dbReference type="GO" id="GO:0010181">
    <property type="term" value="F:FMN binding"/>
    <property type="evidence" value="ECO:0000318"/>
    <property type="project" value="GO_Central"/>
</dbReference>
<dbReference type="GO" id="GO:0008652">
    <property type="term" value="P:amino acid biosynthetic process"/>
    <property type="evidence" value="ECO:0007669"/>
    <property type="project" value="UniProtKB-KW"/>
</dbReference>
<dbReference type="GO" id="GO:0009073">
    <property type="term" value="P:aromatic amino acid family biosynthetic process"/>
    <property type="evidence" value="ECO:0000318"/>
    <property type="project" value="GO_Central"/>
</dbReference>
<dbReference type="GO" id="GO:0009423">
    <property type="term" value="P:chorismate biosynthetic process"/>
    <property type="evidence" value="ECO:0000318"/>
    <property type="project" value="GO_Central"/>
</dbReference>
<dbReference type="CDD" id="cd07304">
    <property type="entry name" value="Chorismate_synthase"/>
    <property type="match status" value="1"/>
</dbReference>
<dbReference type="FunFam" id="3.60.150.10:FF:000002">
    <property type="entry name" value="Chorismate synthase"/>
    <property type="match status" value="1"/>
</dbReference>
<dbReference type="Gene3D" id="3.60.150.10">
    <property type="entry name" value="Chorismate synthase AroC"/>
    <property type="match status" value="1"/>
</dbReference>
<dbReference type="HAMAP" id="MF_00300">
    <property type="entry name" value="Chorismate_synth"/>
    <property type="match status" value="1"/>
</dbReference>
<dbReference type="InterPro" id="IPR000453">
    <property type="entry name" value="Chorismate_synth"/>
</dbReference>
<dbReference type="InterPro" id="IPR035904">
    <property type="entry name" value="Chorismate_synth_AroC_sf"/>
</dbReference>
<dbReference type="InterPro" id="IPR020541">
    <property type="entry name" value="Chorismate_synthase_CS"/>
</dbReference>
<dbReference type="NCBIfam" id="TIGR00033">
    <property type="entry name" value="aroC"/>
    <property type="match status" value="1"/>
</dbReference>
<dbReference type="NCBIfam" id="NF003793">
    <property type="entry name" value="PRK05382.1"/>
    <property type="match status" value="1"/>
</dbReference>
<dbReference type="PANTHER" id="PTHR21085">
    <property type="entry name" value="CHORISMATE SYNTHASE"/>
    <property type="match status" value="1"/>
</dbReference>
<dbReference type="PANTHER" id="PTHR21085:SF0">
    <property type="entry name" value="CHORISMATE SYNTHASE"/>
    <property type="match status" value="1"/>
</dbReference>
<dbReference type="Pfam" id="PF01264">
    <property type="entry name" value="Chorismate_synt"/>
    <property type="match status" value="1"/>
</dbReference>
<dbReference type="PIRSF" id="PIRSF001456">
    <property type="entry name" value="Chorismate_synth"/>
    <property type="match status" value="1"/>
</dbReference>
<dbReference type="SUPFAM" id="SSF103263">
    <property type="entry name" value="Chorismate synthase, AroC"/>
    <property type="match status" value="1"/>
</dbReference>
<dbReference type="PROSITE" id="PS00787">
    <property type="entry name" value="CHORISMATE_SYNTHASE_1"/>
    <property type="match status" value="1"/>
</dbReference>
<dbReference type="PROSITE" id="PS00788">
    <property type="entry name" value="CHORISMATE_SYNTHASE_2"/>
    <property type="match status" value="1"/>
</dbReference>